<comment type="subcellular location">
    <subcellularLocation>
        <location evidence="1">Cell inner membrane</location>
        <topology evidence="1">Multi-pass membrane protein</topology>
    </subcellularLocation>
</comment>
<comment type="similarity">
    <text evidence="1">Belongs to the major facilitator superfamily. DHA1 family. MdtL (TC 2.A.1.2.22) subfamily.</text>
</comment>
<evidence type="ECO:0000255" key="1">
    <source>
        <dbReference type="HAMAP-Rule" id="MF_01530"/>
    </source>
</evidence>
<dbReference type="EMBL" id="CP001144">
    <property type="protein sequence ID" value="ACH76694.1"/>
    <property type="molecule type" value="Genomic_DNA"/>
</dbReference>
<dbReference type="RefSeq" id="WP_000819602.1">
    <property type="nucleotide sequence ID" value="NC_011205.1"/>
</dbReference>
<dbReference type="SMR" id="B5FN15"/>
<dbReference type="KEGG" id="sed:SeD_A4235"/>
<dbReference type="HOGENOM" id="CLU_001265_47_1_6"/>
<dbReference type="Proteomes" id="UP000008322">
    <property type="component" value="Chromosome"/>
</dbReference>
<dbReference type="GO" id="GO:0005886">
    <property type="term" value="C:plasma membrane"/>
    <property type="evidence" value="ECO:0007669"/>
    <property type="project" value="UniProtKB-SubCell"/>
</dbReference>
<dbReference type="GO" id="GO:0022857">
    <property type="term" value="F:transmembrane transporter activity"/>
    <property type="evidence" value="ECO:0007669"/>
    <property type="project" value="UniProtKB-UniRule"/>
</dbReference>
<dbReference type="CDD" id="cd17320">
    <property type="entry name" value="MFS_MdfA_MDR_like"/>
    <property type="match status" value="1"/>
</dbReference>
<dbReference type="FunFam" id="1.20.1720.10:FF:000003">
    <property type="entry name" value="Multidrug resistance protein MdtL"/>
    <property type="match status" value="1"/>
</dbReference>
<dbReference type="Gene3D" id="1.20.1720.10">
    <property type="entry name" value="Multidrug resistance protein D"/>
    <property type="match status" value="1"/>
</dbReference>
<dbReference type="HAMAP" id="MF_01530">
    <property type="entry name" value="MFS_MdtL"/>
    <property type="match status" value="1"/>
</dbReference>
<dbReference type="InterPro" id="IPR011701">
    <property type="entry name" value="MFS"/>
</dbReference>
<dbReference type="InterPro" id="IPR020846">
    <property type="entry name" value="MFS_dom"/>
</dbReference>
<dbReference type="InterPro" id="IPR036259">
    <property type="entry name" value="MFS_trans_sf"/>
</dbReference>
<dbReference type="InterPro" id="IPR023697">
    <property type="entry name" value="Multidrug-R_MdtL"/>
</dbReference>
<dbReference type="NCBIfam" id="NF007782">
    <property type="entry name" value="PRK10473.1"/>
    <property type="match status" value="1"/>
</dbReference>
<dbReference type="PANTHER" id="PTHR42718">
    <property type="entry name" value="MAJOR FACILITATOR SUPERFAMILY MULTIDRUG TRANSPORTER MFSC"/>
    <property type="match status" value="1"/>
</dbReference>
<dbReference type="PANTHER" id="PTHR42718:SF9">
    <property type="entry name" value="MAJOR FACILITATOR SUPERFAMILY MULTIDRUG TRANSPORTER MFSC"/>
    <property type="match status" value="1"/>
</dbReference>
<dbReference type="Pfam" id="PF07690">
    <property type="entry name" value="MFS_1"/>
    <property type="match status" value="1"/>
</dbReference>
<dbReference type="SUPFAM" id="SSF103473">
    <property type="entry name" value="MFS general substrate transporter"/>
    <property type="match status" value="1"/>
</dbReference>
<dbReference type="PROSITE" id="PS50850">
    <property type="entry name" value="MFS"/>
    <property type="match status" value="1"/>
</dbReference>
<protein>
    <recommendedName>
        <fullName evidence="1">Multidrug resistance protein MdtL</fullName>
    </recommendedName>
</protein>
<accession>B5FN15</accession>
<reference key="1">
    <citation type="journal article" date="2011" name="J. Bacteriol.">
        <title>Comparative genomics of 28 Salmonella enterica isolates: evidence for CRISPR-mediated adaptive sublineage evolution.</title>
        <authorList>
            <person name="Fricke W.F."/>
            <person name="Mammel M.K."/>
            <person name="McDermott P.F."/>
            <person name="Tartera C."/>
            <person name="White D.G."/>
            <person name="Leclerc J.E."/>
            <person name="Ravel J."/>
            <person name="Cebula T.A."/>
        </authorList>
    </citation>
    <scope>NUCLEOTIDE SEQUENCE [LARGE SCALE GENOMIC DNA]</scope>
    <source>
        <strain>CT_02021853</strain>
    </source>
</reference>
<gene>
    <name evidence="1" type="primary">mdtL</name>
    <name type="ordered locus">SeD_A4235</name>
</gene>
<name>MDTL_SALDC</name>
<feature type="chain" id="PRO_1000200827" description="Multidrug resistance protein MdtL">
    <location>
        <begin position="1"/>
        <end position="395"/>
    </location>
</feature>
<feature type="transmembrane region" description="Helical" evidence="1">
    <location>
        <begin position="4"/>
        <end position="24"/>
    </location>
</feature>
<feature type="transmembrane region" description="Helical" evidence="1">
    <location>
        <begin position="42"/>
        <end position="62"/>
    </location>
</feature>
<feature type="transmembrane region" description="Helical" evidence="1">
    <location>
        <begin position="69"/>
        <end position="89"/>
    </location>
</feature>
<feature type="transmembrane region" description="Helical" evidence="1">
    <location>
        <begin position="93"/>
        <end position="113"/>
    </location>
</feature>
<feature type="transmembrane region" description="Helical" evidence="1">
    <location>
        <begin position="131"/>
        <end position="151"/>
    </location>
</feature>
<feature type="transmembrane region" description="Helical" evidence="1">
    <location>
        <begin position="158"/>
        <end position="178"/>
    </location>
</feature>
<feature type="transmembrane region" description="Helical" evidence="1">
    <location>
        <begin position="217"/>
        <end position="237"/>
    </location>
</feature>
<feature type="transmembrane region" description="Helical" evidence="1">
    <location>
        <begin position="247"/>
        <end position="267"/>
    </location>
</feature>
<feature type="transmembrane region" description="Helical" evidence="1">
    <location>
        <begin position="271"/>
        <end position="291"/>
    </location>
</feature>
<feature type="transmembrane region" description="Helical" evidence="1">
    <location>
        <begin position="295"/>
        <end position="315"/>
    </location>
</feature>
<feature type="transmembrane region" description="Helical" evidence="1">
    <location>
        <begin position="328"/>
        <end position="350"/>
    </location>
</feature>
<feature type="transmembrane region" description="Helical" evidence="1">
    <location>
        <begin position="355"/>
        <end position="377"/>
    </location>
</feature>
<proteinExistence type="inferred from homology"/>
<sequence length="395" mass="42041">MKRFLLCSFALVLLYPAGIDMYLVGLPRIAADLNASEAQLHIAFSVYLAGMATAMLFAGKIADQSGRKPVAIVGAIVFMMASLLCSRASEGSLFLSGRFLQGIGAGGCYVVAFAILRDTLDEHRRAKVLSLLNGITCIVPVLAPVVGHLIMLRFPWQSLFYTMSAMGIIVGLLSLFILRETRPVRLAPRDLSRSSPAAESLINRFFVSRLAITTLSVSVILTFVNASPVLLMEVMGFSRGDYAITMALTAGVSMVVSFSTPFALGLFKPRTLMLVSQGLFLTAGVTLSLAHTNTVTLFGLTLICAGFSVGFGVAMSQALGPFSLRAGVASSTLGIAQVCGSSLWIWLAAILGISAMNMLIGILIGCSIVSILLIFSVTPNRSVAEHEEIPYQSRP</sequence>
<keyword id="KW-0997">Cell inner membrane</keyword>
<keyword id="KW-1003">Cell membrane</keyword>
<keyword id="KW-0472">Membrane</keyword>
<keyword id="KW-0812">Transmembrane</keyword>
<keyword id="KW-1133">Transmembrane helix</keyword>
<keyword id="KW-0813">Transport</keyword>
<organism>
    <name type="scientific">Salmonella dublin (strain CT_02021853)</name>
    <dbReference type="NCBI Taxonomy" id="439851"/>
    <lineage>
        <taxon>Bacteria</taxon>
        <taxon>Pseudomonadati</taxon>
        <taxon>Pseudomonadota</taxon>
        <taxon>Gammaproteobacteria</taxon>
        <taxon>Enterobacterales</taxon>
        <taxon>Enterobacteriaceae</taxon>
        <taxon>Salmonella</taxon>
    </lineage>
</organism>